<name>ARGR_ACTPJ</name>
<feature type="chain" id="PRO_1000097855" description="Arginine repressor">
    <location>
        <begin position="1"/>
        <end position="153"/>
    </location>
</feature>
<dbReference type="EMBL" id="CP000687">
    <property type="protein sequence ID" value="ABY69864.1"/>
    <property type="molecule type" value="Genomic_DNA"/>
</dbReference>
<dbReference type="RefSeq" id="WP_012263169.1">
    <property type="nucleotide sequence ID" value="NC_010278.1"/>
</dbReference>
<dbReference type="SMR" id="B0BQM9"/>
<dbReference type="KEGG" id="apj:APJL_1308"/>
<dbReference type="HOGENOM" id="CLU_097103_2_0_6"/>
<dbReference type="UniPathway" id="UPA00068"/>
<dbReference type="Proteomes" id="UP000008547">
    <property type="component" value="Chromosome"/>
</dbReference>
<dbReference type="GO" id="GO:0005737">
    <property type="term" value="C:cytoplasm"/>
    <property type="evidence" value="ECO:0007669"/>
    <property type="project" value="UniProtKB-SubCell"/>
</dbReference>
<dbReference type="GO" id="GO:0034618">
    <property type="term" value="F:arginine binding"/>
    <property type="evidence" value="ECO:0007669"/>
    <property type="project" value="InterPro"/>
</dbReference>
<dbReference type="GO" id="GO:0003677">
    <property type="term" value="F:DNA binding"/>
    <property type="evidence" value="ECO:0007669"/>
    <property type="project" value="UniProtKB-KW"/>
</dbReference>
<dbReference type="GO" id="GO:0003700">
    <property type="term" value="F:DNA-binding transcription factor activity"/>
    <property type="evidence" value="ECO:0007669"/>
    <property type="project" value="UniProtKB-UniRule"/>
</dbReference>
<dbReference type="GO" id="GO:0006526">
    <property type="term" value="P:L-arginine biosynthetic process"/>
    <property type="evidence" value="ECO:0007669"/>
    <property type="project" value="UniProtKB-UniPathway"/>
</dbReference>
<dbReference type="GO" id="GO:0051259">
    <property type="term" value="P:protein complex oligomerization"/>
    <property type="evidence" value="ECO:0007669"/>
    <property type="project" value="InterPro"/>
</dbReference>
<dbReference type="GO" id="GO:1900079">
    <property type="term" value="P:regulation of arginine biosynthetic process"/>
    <property type="evidence" value="ECO:0007669"/>
    <property type="project" value="UniProtKB-UniRule"/>
</dbReference>
<dbReference type="Gene3D" id="3.30.1360.40">
    <property type="match status" value="1"/>
</dbReference>
<dbReference type="Gene3D" id="1.10.10.10">
    <property type="entry name" value="Winged helix-like DNA-binding domain superfamily/Winged helix DNA-binding domain"/>
    <property type="match status" value="1"/>
</dbReference>
<dbReference type="HAMAP" id="MF_00173">
    <property type="entry name" value="Arg_repressor"/>
    <property type="match status" value="1"/>
</dbReference>
<dbReference type="InterPro" id="IPR001669">
    <property type="entry name" value="Arg_repress"/>
</dbReference>
<dbReference type="InterPro" id="IPR020899">
    <property type="entry name" value="Arg_repress_C"/>
</dbReference>
<dbReference type="InterPro" id="IPR036251">
    <property type="entry name" value="Arg_repress_C_sf"/>
</dbReference>
<dbReference type="InterPro" id="IPR020900">
    <property type="entry name" value="Arg_repress_DNA-bd"/>
</dbReference>
<dbReference type="InterPro" id="IPR036388">
    <property type="entry name" value="WH-like_DNA-bd_sf"/>
</dbReference>
<dbReference type="InterPro" id="IPR036390">
    <property type="entry name" value="WH_DNA-bd_sf"/>
</dbReference>
<dbReference type="NCBIfam" id="TIGR01529">
    <property type="entry name" value="argR_whole"/>
    <property type="match status" value="1"/>
</dbReference>
<dbReference type="NCBIfam" id="NF003457">
    <property type="entry name" value="PRK05066.1"/>
    <property type="match status" value="1"/>
</dbReference>
<dbReference type="PANTHER" id="PTHR34471">
    <property type="entry name" value="ARGININE REPRESSOR"/>
    <property type="match status" value="1"/>
</dbReference>
<dbReference type="PANTHER" id="PTHR34471:SF1">
    <property type="entry name" value="ARGININE REPRESSOR"/>
    <property type="match status" value="1"/>
</dbReference>
<dbReference type="Pfam" id="PF01316">
    <property type="entry name" value="Arg_repressor"/>
    <property type="match status" value="1"/>
</dbReference>
<dbReference type="Pfam" id="PF02863">
    <property type="entry name" value="Arg_repressor_C"/>
    <property type="match status" value="1"/>
</dbReference>
<dbReference type="PRINTS" id="PR01467">
    <property type="entry name" value="ARGREPRESSOR"/>
</dbReference>
<dbReference type="SUPFAM" id="SSF55252">
    <property type="entry name" value="C-terminal domain of arginine repressor"/>
    <property type="match status" value="1"/>
</dbReference>
<dbReference type="SUPFAM" id="SSF46785">
    <property type="entry name" value="Winged helix' DNA-binding domain"/>
    <property type="match status" value="1"/>
</dbReference>
<sequence length="153" mass="16687">MEKLDKLSEAFKALLKQEKFGSQSEIVTALQELGFENINQSKVSRMLSKFGAVRTRNTKMEMVYQLPAELGVPTTSSPLKNLVVDIDHNDVLIVVKTSPGAAQLIARLLDSMGKSGGILGTIAGDDTIFITPTKVTPVEVLMQNVTELFESSF</sequence>
<accession>B0BQM9</accession>
<proteinExistence type="inferred from homology"/>
<gene>
    <name evidence="1" type="primary">argR</name>
    <name type="ordered locus">APJL_1308</name>
</gene>
<organism>
    <name type="scientific">Actinobacillus pleuropneumoniae serotype 3 (strain JL03)</name>
    <dbReference type="NCBI Taxonomy" id="434271"/>
    <lineage>
        <taxon>Bacteria</taxon>
        <taxon>Pseudomonadati</taxon>
        <taxon>Pseudomonadota</taxon>
        <taxon>Gammaproteobacteria</taxon>
        <taxon>Pasteurellales</taxon>
        <taxon>Pasteurellaceae</taxon>
        <taxon>Actinobacillus</taxon>
    </lineage>
</organism>
<keyword id="KW-0028">Amino-acid biosynthesis</keyword>
<keyword id="KW-0055">Arginine biosynthesis</keyword>
<keyword id="KW-0963">Cytoplasm</keyword>
<keyword id="KW-0238">DNA-binding</keyword>
<keyword id="KW-0678">Repressor</keyword>
<keyword id="KW-0804">Transcription</keyword>
<keyword id="KW-0805">Transcription regulation</keyword>
<reference key="1">
    <citation type="journal article" date="2008" name="PLoS ONE">
        <title>Genome biology of Actinobacillus pleuropneumoniae JL03, an isolate of serotype 3 prevalent in China.</title>
        <authorList>
            <person name="Xu Z."/>
            <person name="Zhou Y."/>
            <person name="Li L."/>
            <person name="Zhou R."/>
            <person name="Xiao S."/>
            <person name="Wan Y."/>
            <person name="Zhang S."/>
            <person name="Wang K."/>
            <person name="Li W."/>
            <person name="Li L."/>
            <person name="Jin H."/>
            <person name="Kang M."/>
            <person name="Dalai B."/>
            <person name="Li T."/>
            <person name="Liu L."/>
            <person name="Cheng Y."/>
            <person name="Zhang L."/>
            <person name="Xu T."/>
            <person name="Zheng H."/>
            <person name="Pu S."/>
            <person name="Wang B."/>
            <person name="Gu W."/>
            <person name="Zhang X.L."/>
            <person name="Zhu G.-F."/>
            <person name="Wang S."/>
            <person name="Zhao G.-P."/>
            <person name="Chen H."/>
        </authorList>
    </citation>
    <scope>NUCLEOTIDE SEQUENCE [LARGE SCALE GENOMIC DNA]</scope>
    <source>
        <strain>JL03</strain>
    </source>
</reference>
<evidence type="ECO:0000255" key="1">
    <source>
        <dbReference type="HAMAP-Rule" id="MF_00173"/>
    </source>
</evidence>
<protein>
    <recommendedName>
        <fullName evidence="1">Arginine repressor</fullName>
    </recommendedName>
</protein>
<comment type="function">
    <text evidence="1">Regulates arginine biosynthesis genes.</text>
</comment>
<comment type="pathway">
    <text>Amino-acid biosynthesis; L-arginine biosynthesis [regulation].</text>
</comment>
<comment type="subcellular location">
    <subcellularLocation>
        <location evidence="1">Cytoplasm</location>
    </subcellularLocation>
</comment>
<comment type="similarity">
    <text evidence="1">Belongs to the ArgR family.</text>
</comment>